<sequence length="312" mass="34325">MNKSNTAIDPTNVIEAGPDSSVADVQQKSWKDYLVLAKQGIVTSNLITTFAGIYLAIVYTGTVFTMHLDTMIFALLGAALVMAGGCTLNNYIDRDIDHLMERTKERPTVTGRFSAKHVLLVGLAQAALGIIFLALTTPTAAVIGLIGLFIYVVLYTMWTKRTTTLNTIVGSFSGAVPPLIGWAAIDGGLHLYAWLLFFIMFLWQPPHFLALAMKRVEEYRAAGIPMLPVVAGFEMTKRQMVVYVAALLPVSLMLYPFGLVYTIVAAVLGVGWLALGIAGFKMKDDIKWARLMFVYSLNYLTILFVLMVIVHF</sequence>
<evidence type="ECO:0000250" key="1"/>
<evidence type="ECO:0000255" key="2"/>
<evidence type="ECO:0000305" key="3"/>
<protein>
    <recommendedName>
        <fullName>Protoheme IX farnesyltransferase</fullName>
        <ecNumber>2.5.1.141</ecNumber>
    </recommendedName>
    <alternativeName>
        <fullName>Heme O synthase</fullName>
    </alternativeName>
</protein>
<organism>
    <name type="scientific">Alkalihalophilus pseudofirmus (strain ATCC BAA-2126 / JCM 17055 / OF4)</name>
    <name type="common">Bacillus pseudofirmus</name>
    <dbReference type="NCBI Taxonomy" id="398511"/>
    <lineage>
        <taxon>Bacteria</taxon>
        <taxon>Bacillati</taxon>
        <taxon>Bacillota</taxon>
        <taxon>Bacilli</taxon>
        <taxon>Bacillales</taxon>
        <taxon>Bacillaceae</taxon>
        <taxon>Alkalihalophilus</taxon>
    </lineage>
</organism>
<reference key="1">
    <citation type="journal article" date="1993" name="J. Biol. Chem.">
        <title>Cloning of the cta operon from alkaliphilic Bacillus firmus OF4 and characterization of the pH-regulated cytochrome caa3 oxidase it encodes.</title>
        <authorList>
            <person name="Quirk P.G."/>
            <person name="Hicks D.B."/>
            <person name="Krulwich T.A."/>
        </authorList>
    </citation>
    <scope>NUCLEOTIDE SEQUENCE [GENOMIC DNA]</scope>
</reference>
<reference key="2">
    <citation type="journal article" date="2011" name="Environ. Microbiol.">
        <title>Genome of alkaliphilic Bacillus pseudofirmus OF4 reveals adaptations that support the ability to grow in an external pH range from 7.5 to 11.4.</title>
        <authorList>
            <person name="Janto B."/>
            <person name="Ahmed A."/>
            <person name="Ito M."/>
            <person name="Liu J."/>
            <person name="Hicks D.B."/>
            <person name="Pagni S."/>
            <person name="Fackelmayer O.J."/>
            <person name="Smith T.A."/>
            <person name="Earl J."/>
            <person name="Elbourne L.D."/>
            <person name="Hassan K."/>
            <person name="Paulsen I.T."/>
            <person name="Kolsto A.B."/>
            <person name="Tourasse N.J."/>
            <person name="Ehrlich G.D."/>
            <person name="Boissy R."/>
            <person name="Ivey D.M."/>
            <person name="Li G."/>
            <person name="Xue Y."/>
            <person name="Ma Y."/>
            <person name="Hu F.Z."/>
            <person name="Krulwich T.A."/>
        </authorList>
    </citation>
    <scope>NUCLEOTIDE SEQUENCE [LARGE SCALE GENOMIC DNA]</scope>
    <source>
        <strain>ATCC BAA-2126 / JCM 17055 / OF4</strain>
    </source>
</reference>
<comment type="function">
    <text evidence="1">Converts protoheme IX and farnesyl diphosphate to heme O.</text>
</comment>
<comment type="catalytic activity">
    <reaction>
        <text>heme b + (2E,6E)-farnesyl diphosphate + H2O = Fe(II)-heme o + diphosphate</text>
        <dbReference type="Rhea" id="RHEA:28070"/>
        <dbReference type="ChEBI" id="CHEBI:15377"/>
        <dbReference type="ChEBI" id="CHEBI:33019"/>
        <dbReference type="ChEBI" id="CHEBI:60344"/>
        <dbReference type="ChEBI" id="CHEBI:60530"/>
        <dbReference type="ChEBI" id="CHEBI:175763"/>
        <dbReference type="EC" id="2.5.1.141"/>
    </reaction>
</comment>
<comment type="pathway">
    <text>Porphyrin-containing compound metabolism; heme O biosynthesis; heme O from protoheme: step 1/1.</text>
</comment>
<comment type="subcellular location">
    <subcellularLocation>
        <location>Cell membrane</location>
        <topology>Multi-pass membrane protein</topology>
    </subcellularLocation>
</comment>
<comment type="similarity">
    <text evidence="3">Belongs to the UbiA prenyltransferase family.</text>
</comment>
<dbReference type="EC" id="2.5.1.141"/>
<dbReference type="EMBL" id="M94110">
    <property type="protein sequence ID" value="AAA22363.1"/>
    <property type="molecule type" value="Genomic_DNA"/>
</dbReference>
<dbReference type="EMBL" id="CP001878">
    <property type="protein sequence ID" value="ADC48253.1"/>
    <property type="molecule type" value="Genomic_DNA"/>
</dbReference>
<dbReference type="RefSeq" id="WP_012959535.1">
    <property type="nucleotide sequence ID" value="NC_013791.2"/>
</dbReference>
<dbReference type="SMR" id="Q04444"/>
<dbReference type="STRING" id="398511.BpOF4_00920"/>
<dbReference type="KEGG" id="bpf:BpOF4_00920"/>
<dbReference type="eggNOG" id="COG0109">
    <property type="taxonomic scope" value="Bacteria"/>
</dbReference>
<dbReference type="HOGENOM" id="CLU_029631_0_0_9"/>
<dbReference type="UniPathway" id="UPA00834">
    <property type="reaction ID" value="UER00712"/>
</dbReference>
<dbReference type="Proteomes" id="UP000001544">
    <property type="component" value="Chromosome"/>
</dbReference>
<dbReference type="GO" id="GO:0005886">
    <property type="term" value="C:plasma membrane"/>
    <property type="evidence" value="ECO:0007669"/>
    <property type="project" value="UniProtKB-SubCell"/>
</dbReference>
<dbReference type="GO" id="GO:0008495">
    <property type="term" value="F:protoheme IX farnesyltransferase activity"/>
    <property type="evidence" value="ECO:0007669"/>
    <property type="project" value="UniProtKB-UniRule"/>
</dbReference>
<dbReference type="GO" id="GO:0048034">
    <property type="term" value="P:heme O biosynthetic process"/>
    <property type="evidence" value="ECO:0007669"/>
    <property type="project" value="UniProtKB-UniRule"/>
</dbReference>
<dbReference type="CDD" id="cd13957">
    <property type="entry name" value="PT_UbiA_Cox10"/>
    <property type="match status" value="1"/>
</dbReference>
<dbReference type="FunFam" id="1.10.357.140:FF:000001">
    <property type="entry name" value="Protoheme IX farnesyltransferase"/>
    <property type="match status" value="1"/>
</dbReference>
<dbReference type="Gene3D" id="1.10.357.140">
    <property type="entry name" value="UbiA prenyltransferase"/>
    <property type="match status" value="1"/>
</dbReference>
<dbReference type="HAMAP" id="MF_00154">
    <property type="entry name" value="CyoE_CtaB"/>
    <property type="match status" value="1"/>
</dbReference>
<dbReference type="InterPro" id="IPR006369">
    <property type="entry name" value="Protohaem_IX_farnesylTrfase"/>
</dbReference>
<dbReference type="InterPro" id="IPR000537">
    <property type="entry name" value="UbiA_prenyltransferase"/>
</dbReference>
<dbReference type="InterPro" id="IPR030470">
    <property type="entry name" value="UbiA_prenylTrfase_CS"/>
</dbReference>
<dbReference type="InterPro" id="IPR044878">
    <property type="entry name" value="UbiA_sf"/>
</dbReference>
<dbReference type="NCBIfam" id="TIGR01473">
    <property type="entry name" value="cyoE_ctaB"/>
    <property type="match status" value="1"/>
</dbReference>
<dbReference type="NCBIfam" id="NF003349">
    <property type="entry name" value="PRK04375.1-2"/>
    <property type="match status" value="1"/>
</dbReference>
<dbReference type="PANTHER" id="PTHR43448">
    <property type="entry name" value="PROTOHEME IX FARNESYLTRANSFERASE, MITOCHONDRIAL"/>
    <property type="match status" value="1"/>
</dbReference>
<dbReference type="PANTHER" id="PTHR43448:SF2">
    <property type="entry name" value="PROTOHEME IX FARNESYLTRANSFERASE, MITOCHONDRIAL"/>
    <property type="match status" value="1"/>
</dbReference>
<dbReference type="Pfam" id="PF01040">
    <property type="entry name" value="UbiA"/>
    <property type="match status" value="1"/>
</dbReference>
<dbReference type="PROSITE" id="PS00943">
    <property type="entry name" value="UBIA"/>
    <property type="match status" value="1"/>
</dbReference>
<proteinExistence type="inferred from homology"/>
<gene>
    <name type="primary">ctaB</name>
    <name type="ordered locus">BpOF4_00920</name>
</gene>
<accession>Q04444</accession>
<accession>D3FU51</accession>
<feature type="chain" id="PRO_0000162904" description="Protoheme IX farnesyltransferase">
    <location>
        <begin position="1"/>
        <end position="312"/>
    </location>
</feature>
<feature type="topological domain" description="Cytoplasmic" evidence="2">
    <location>
        <begin position="1"/>
        <end position="36"/>
    </location>
</feature>
<feature type="transmembrane region" description="Helical" evidence="2">
    <location>
        <begin position="37"/>
        <end position="55"/>
    </location>
</feature>
<feature type="topological domain" description="Extracellular" evidence="2">
    <location>
        <begin position="56"/>
        <end position="69"/>
    </location>
</feature>
<feature type="transmembrane region" description="Helical" evidence="2">
    <location>
        <begin position="70"/>
        <end position="88"/>
    </location>
</feature>
<feature type="topological domain" description="Cytoplasmic" evidence="2">
    <location>
        <begin position="89"/>
        <end position="110"/>
    </location>
</feature>
<feature type="transmembrane region" description="Helical" evidence="2">
    <location>
        <begin position="111"/>
        <end position="129"/>
    </location>
</feature>
<feature type="topological domain" description="Extracellular" evidence="2">
    <location>
        <begin position="130"/>
        <end position="138"/>
    </location>
</feature>
<feature type="transmembrane region" description="Helical" evidence="2">
    <location>
        <begin position="139"/>
        <end position="157"/>
    </location>
</feature>
<feature type="topological domain" description="Cytoplasmic" evidence="2">
    <location>
        <begin position="158"/>
        <end position="228"/>
    </location>
</feature>
<feature type="transmembrane region" description="Helical" evidence="2">
    <location>
        <begin position="229"/>
        <end position="247"/>
    </location>
</feature>
<feature type="topological domain" description="Extracellular" evidence="2">
    <location>
        <begin position="248"/>
        <end position="259"/>
    </location>
</feature>
<feature type="transmembrane region" description="Helical" evidence="2">
    <location>
        <begin position="260"/>
        <end position="275"/>
    </location>
</feature>
<feature type="topological domain" description="Cytoplasmic" evidence="2">
    <location>
        <begin position="276"/>
        <end position="296"/>
    </location>
</feature>
<feature type="transmembrane region" description="Helical" evidence="2">
    <location>
        <begin position="297"/>
        <end position="307"/>
    </location>
</feature>
<feature type="topological domain" description="Extracellular" evidence="2">
    <location>
        <begin position="308"/>
        <end position="312"/>
    </location>
</feature>
<name>COXX_ALKPO</name>
<keyword id="KW-1003">Cell membrane</keyword>
<keyword id="KW-0350">Heme biosynthesis</keyword>
<keyword id="KW-0472">Membrane</keyword>
<keyword id="KW-1185">Reference proteome</keyword>
<keyword id="KW-0808">Transferase</keyword>
<keyword id="KW-0812">Transmembrane</keyword>
<keyword id="KW-1133">Transmembrane helix</keyword>